<proteinExistence type="inferred from homology"/>
<organism>
    <name type="scientific">Salmonella typhi</name>
    <dbReference type="NCBI Taxonomy" id="90370"/>
    <lineage>
        <taxon>Bacteria</taxon>
        <taxon>Pseudomonadati</taxon>
        <taxon>Pseudomonadota</taxon>
        <taxon>Gammaproteobacteria</taxon>
        <taxon>Enterobacterales</taxon>
        <taxon>Enterobacteriaceae</taxon>
        <taxon>Salmonella</taxon>
    </lineage>
</organism>
<reference key="1">
    <citation type="journal article" date="2001" name="Nature">
        <title>Complete genome sequence of a multiple drug resistant Salmonella enterica serovar Typhi CT18.</title>
        <authorList>
            <person name="Parkhill J."/>
            <person name="Dougan G."/>
            <person name="James K.D."/>
            <person name="Thomson N.R."/>
            <person name="Pickard D."/>
            <person name="Wain J."/>
            <person name="Churcher C.M."/>
            <person name="Mungall K.L."/>
            <person name="Bentley S.D."/>
            <person name="Holden M.T.G."/>
            <person name="Sebaihia M."/>
            <person name="Baker S."/>
            <person name="Basham D."/>
            <person name="Brooks K."/>
            <person name="Chillingworth T."/>
            <person name="Connerton P."/>
            <person name="Cronin A."/>
            <person name="Davis P."/>
            <person name="Davies R.M."/>
            <person name="Dowd L."/>
            <person name="White N."/>
            <person name="Farrar J."/>
            <person name="Feltwell T."/>
            <person name="Hamlin N."/>
            <person name="Haque A."/>
            <person name="Hien T.T."/>
            <person name="Holroyd S."/>
            <person name="Jagels K."/>
            <person name="Krogh A."/>
            <person name="Larsen T.S."/>
            <person name="Leather S."/>
            <person name="Moule S."/>
            <person name="O'Gaora P."/>
            <person name="Parry C."/>
            <person name="Quail M.A."/>
            <person name="Rutherford K.M."/>
            <person name="Simmonds M."/>
            <person name="Skelton J."/>
            <person name="Stevens K."/>
            <person name="Whitehead S."/>
            <person name="Barrell B.G."/>
        </authorList>
    </citation>
    <scope>NUCLEOTIDE SEQUENCE [LARGE SCALE GENOMIC DNA]</scope>
    <source>
        <strain>CT18</strain>
    </source>
</reference>
<reference key="2">
    <citation type="journal article" date="2003" name="J. Bacteriol.">
        <title>Comparative genomics of Salmonella enterica serovar Typhi strains Ty2 and CT18.</title>
        <authorList>
            <person name="Deng W."/>
            <person name="Liou S.-R."/>
            <person name="Plunkett G. III"/>
            <person name="Mayhew G.F."/>
            <person name="Rose D.J."/>
            <person name="Burland V."/>
            <person name="Kodoyianni V."/>
            <person name="Schwartz D.C."/>
            <person name="Blattner F.R."/>
        </authorList>
    </citation>
    <scope>NUCLEOTIDE SEQUENCE [LARGE SCALE GENOMIC DNA]</scope>
    <source>
        <strain>ATCC 700931 / Ty2</strain>
    </source>
</reference>
<protein>
    <recommendedName>
        <fullName>Major curlin subunit</fullName>
    </recommendedName>
    <alternativeName>
        <fullName>Fimbrin SEF17</fullName>
    </alternativeName>
</protein>
<keyword id="KW-0281">Fimbrium</keyword>
<keyword id="KW-0732">Signal</keyword>
<feature type="signal peptide" evidence="1">
    <location>
        <begin position="1"/>
        <end position="20"/>
    </location>
</feature>
<feature type="chain" id="PRO_0000006372" description="Major curlin subunit">
    <location>
        <begin position="21"/>
        <end position="151"/>
    </location>
</feature>
<dbReference type="EMBL" id="AL513382">
    <property type="protein sequence ID" value="CAD08268.1"/>
    <property type="molecule type" value="Genomic_DNA"/>
</dbReference>
<dbReference type="EMBL" id="AE014613">
    <property type="protein sequence ID" value="AAO69399.1"/>
    <property type="molecule type" value="Genomic_DNA"/>
</dbReference>
<dbReference type="RefSeq" id="NP_455638.1">
    <property type="nucleotide sequence ID" value="NC_003198.1"/>
</dbReference>
<dbReference type="RefSeq" id="WP_000771416.1">
    <property type="nucleotide sequence ID" value="NZ_WSUR01000018.1"/>
</dbReference>
<dbReference type="SMR" id="P0A1E6"/>
<dbReference type="STRING" id="220341.gene:17585148"/>
<dbReference type="GeneID" id="66755549"/>
<dbReference type="KEGG" id="stt:t1776"/>
<dbReference type="KEGG" id="sty:STY1181"/>
<dbReference type="PATRIC" id="fig|220341.7.peg.1181"/>
<dbReference type="eggNOG" id="ENOG5030M63">
    <property type="taxonomic scope" value="Bacteria"/>
</dbReference>
<dbReference type="HOGENOM" id="CLU_1861613_0_0_6"/>
<dbReference type="OMA" id="MKLWKIV"/>
<dbReference type="OrthoDB" id="6572754at2"/>
<dbReference type="Proteomes" id="UP000000541">
    <property type="component" value="Chromosome"/>
</dbReference>
<dbReference type="Proteomes" id="UP000002670">
    <property type="component" value="Chromosome"/>
</dbReference>
<dbReference type="GO" id="GO:0009289">
    <property type="term" value="C:pilus"/>
    <property type="evidence" value="ECO:0007669"/>
    <property type="project" value="UniProtKB-SubCell"/>
</dbReference>
<dbReference type="GO" id="GO:0007155">
    <property type="term" value="P:cell adhesion"/>
    <property type="evidence" value="ECO:0007669"/>
    <property type="project" value="InterPro"/>
</dbReference>
<dbReference type="InterPro" id="IPR009742">
    <property type="entry name" value="Curlin_rpt"/>
</dbReference>
<dbReference type="NCBIfam" id="NF007470">
    <property type="entry name" value="PRK10051.1"/>
    <property type="match status" value="1"/>
</dbReference>
<dbReference type="Pfam" id="PF07012">
    <property type="entry name" value="Curlin_rpt"/>
    <property type="match status" value="4"/>
</dbReference>
<accession>P0A1E6</accession>
<accession>P55225</accession>
<sequence length="151" mass="15305">MKLLKVAAFAAIVVSGSALAGVVPQWGGGGNHNGGGNSSGPDSTLSIYQYGSANAALALQSDARKSETTITQSGYGNGADVGQGADNSTIELTQNGFRNNATIDQWNAKNSDITVGQYGGNNAALVNQTASDSSVMVRQVGFGNNATANQY</sequence>
<evidence type="ECO:0000250" key="1"/>
<evidence type="ECO:0000305" key="2"/>
<comment type="function">
    <text evidence="1">Curlin is the structural subunit of the curli. Curli are coiled surface structures that assemble preferentially at growth temperatures below 37 degrees Celsius. Curli can bind to fibronectin (By similarity).</text>
</comment>
<comment type="subcellular location">
    <subcellularLocation>
        <location>Fimbrium</location>
    </subcellularLocation>
    <text>Part of the curli surface structure.</text>
</comment>
<comment type="similarity">
    <text evidence="2">Belongs to the CsgA/CsgB family.</text>
</comment>
<gene>
    <name type="primary">csgA</name>
    <name type="synonym">agfA</name>
    <name type="ordered locus">STY1181</name>
    <name type="ordered locus">t1776</name>
</gene>
<name>CSGA_SALTI</name>